<organism>
    <name type="scientific">Rhodopseudomonas palustris (strain ATCC BAA-98 / CGA009)</name>
    <dbReference type="NCBI Taxonomy" id="258594"/>
    <lineage>
        <taxon>Bacteria</taxon>
        <taxon>Pseudomonadati</taxon>
        <taxon>Pseudomonadota</taxon>
        <taxon>Alphaproteobacteria</taxon>
        <taxon>Hyphomicrobiales</taxon>
        <taxon>Nitrobacteraceae</taxon>
        <taxon>Rhodopseudomonas</taxon>
    </lineage>
</organism>
<comment type="function">
    <text evidence="2">Responds to the quorum-sensing autoinducer 4-coumaroyl-homoserine lactone to regulate expression of several genes. Represses expression of rpaI in the absence of the inducer.</text>
</comment>
<comment type="similarity">
    <text evidence="4">Belongs to the autoinducer-regulated transcriptional regulatory protein family.</text>
</comment>
<feature type="chain" id="PRO_0000430602" description="HTH-type quorum sensing-dependent transcriptional regulator RpaR">
    <location>
        <begin position="1"/>
        <end position="243"/>
    </location>
</feature>
<feature type="domain" description="HTH luxR-type" evidence="1">
    <location>
        <begin position="174"/>
        <end position="239"/>
    </location>
</feature>
<feature type="DNA-binding region" description="H-T-H motif" evidence="1">
    <location>
        <begin position="198"/>
        <end position="217"/>
    </location>
</feature>
<evidence type="ECO:0000255" key="1">
    <source>
        <dbReference type="PROSITE-ProRule" id="PRU00411"/>
    </source>
</evidence>
<evidence type="ECO:0000269" key="2">
    <source>
    </source>
</evidence>
<evidence type="ECO:0000303" key="3">
    <source>
    </source>
</evidence>
<evidence type="ECO:0000305" key="4"/>
<evidence type="ECO:0000312" key="5">
    <source>
        <dbReference type="EMBL" id="CAE25765.1"/>
    </source>
</evidence>
<name>RPAR_RHOPA</name>
<accession>Q6NCZ5</accession>
<proteinExistence type="evidence at protein level"/>
<reference key="1">
    <citation type="journal article" date="2004" name="Nat. Biotechnol.">
        <title>Complete genome sequence of the metabolically versatile photosynthetic bacterium Rhodopseudomonas palustris.</title>
        <authorList>
            <person name="Larimer F.W."/>
            <person name="Chain P."/>
            <person name="Hauser L."/>
            <person name="Lamerdin J.E."/>
            <person name="Malfatti S."/>
            <person name="Do L."/>
            <person name="Land M.L."/>
            <person name="Pelletier D.A."/>
            <person name="Beatty J.T."/>
            <person name="Lang A.S."/>
            <person name="Tabita F.R."/>
            <person name="Gibson J.L."/>
            <person name="Hanson T.E."/>
            <person name="Bobst C."/>
            <person name="Torres y Torres J.L."/>
            <person name="Peres C."/>
            <person name="Harrison F.H."/>
            <person name="Gibson J."/>
            <person name="Harwood C.S."/>
        </authorList>
    </citation>
    <scope>NUCLEOTIDE SEQUENCE [LARGE SCALE GENOMIC DNA]</scope>
    <source>
        <strain>ATCC BAA-98 / CGA009</strain>
    </source>
</reference>
<reference key="2">
    <citation type="journal article" date="2008" name="Nature">
        <title>A new class of homoserine lactone quorum-sensing signals.</title>
        <authorList>
            <person name="Schaefer A.L."/>
            <person name="Greenberg E.P."/>
            <person name="Oliver C.M."/>
            <person name="Oda Y."/>
            <person name="Huang J.J."/>
            <person name="Bittan-Banin G."/>
            <person name="Peres C.M."/>
            <person name="Schmidt S."/>
            <person name="Juhaszova K."/>
            <person name="Sufrin J.R."/>
            <person name="Harwood C.S."/>
        </authorList>
    </citation>
    <scope>FUNCTION IN QUORUM-SENSING</scope>
    <source>
        <strain>ATCC BAA-98 / CGA009</strain>
    </source>
</reference>
<dbReference type="EMBL" id="BX572594">
    <property type="protein sequence ID" value="CAE25765.1"/>
    <property type="molecule type" value="Genomic_DNA"/>
</dbReference>
<dbReference type="RefSeq" id="WP_011155889.1">
    <property type="nucleotide sequence ID" value="NZ_CP116810.1"/>
</dbReference>
<dbReference type="SMR" id="Q6NCZ5"/>
<dbReference type="STRING" id="258594.RPA0321"/>
<dbReference type="DNASU" id="2689487"/>
<dbReference type="GeneID" id="66891331"/>
<dbReference type="eggNOG" id="COG2197">
    <property type="taxonomic scope" value="Bacteria"/>
</dbReference>
<dbReference type="HOGENOM" id="CLU_072786_4_1_5"/>
<dbReference type="PhylomeDB" id="Q6NCZ5"/>
<dbReference type="GO" id="GO:0003677">
    <property type="term" value="F:DNA binding"/>
    <property type="evidence" value="ECO:0007669"/>
    <property type="project" value="UniProtKB-KW"/>
</dbReference>
<dbReference type="GO" id="GO:0009372">
    <property type="term" value="P:quorum sensing"/>
    <property type="evidence" value="ECO:0007669"/>
    <property type="project" value="UniProtKB-KW"/>
</dbReference>
<dbReference type="GO" id="GO:0006355">
    <property type="term" value="P:regulation of DNA-templated transcription"/>
    <property type="evidence" value="ECO:0007669"/>
    <property type="project" value="InterPro"/>
</dbReference>
<dbReference type="CDD" id="cd06170">
    <property type="entry name" value="LuxR_C_like"/>
    <property type="match status" value="1"/>
</dbReference>
<dbReference type="Gene3D" id="3.30.450.80">
    <property type="entry name" value="Transcription factor LuxR-like, autoinducer-binding domain"/>
    <property type="match status" value="1"/>
</dbReference>
<dbReference type="Gene3D" id="1.10.10.10">
    <property type="entry name" value="Winged helix-like DNA-binding domain superfamily/Winged helix DNA-binding domain"/>
    <property type="match status" value="1"/>
</dbReference>
<dbReference type="InterPro" id="IPR016032">
    <property type="entry name" value="Sig_transdc_resp-reg_C-effctor"/>
</dbReference>
<dbReference type="InterPro" id="IPR005143">
    <property type="entry name" value="TF_LuxR_autoind-bd_dom"/>
</dbReference>
<dbReference type="InterPro" id="IPR036693">
    <property type="entry name" value="TF_LuxR_autoind-bd_dom_sf"/>
</dbReference>
<dbReference type="InterPro" id="IPR000792">
    <property type="entry name" value="Tscrpt_reg_LuxR_C"/>
</dbReference>
<dbReference type="InterPro" id="IPR036388">
    <property type="entry name" value="WH-like_DNA-bd_sf"/>
</dbReference>
<dbReference type="PANTHER" id="PTHR44688">
    <property type="entry name" value="DNA-BINDING TRANSCRIPTIONAL ACTIVATOR DEVR_DOSR"/>
    <property type="match status" value="1"/>
</dbReference>
<dbReference type="PANTHER" id="PTHR44688:SF16">
    <property type="entry name" value="DNA-BINDING TRANSCRIPTIONAL ACTIVATOR DEVR_DOSR"/>
    <property type="match status" value="1"/>
</dbReference>
<dbReference type="Pfam" id="PF03472">
    <property type="entry name" value="Autoind_bind"/>
    <property type="match status" value="1"/>
</dbReference>
<dbReference type="Pfam" id="PF00196">
    <property type="entry name" value="GerE"/>
    <property type="match status" value="1"/>
</dbReference>
<dbReference type="PRINTS" id="PR00038">
    <property type="entry name" value="HTHLUXR"/>
</dbReference>
<dbReference type="SMART" id="SM00421">
    <property type="entry name" value="HTH_LUXR"/>
    <property type="match status" value="1"/>
</dbReference>
<dbReference type="SUPFAM" id="SSF46894">
    <property type="entry name" value="C-terminal effector domain of the bipartite response regulators"/>
    <property type="match status" value="1"/>
</dbReference>
<dbReference type="SUPFAM" id="SSF75516">
    <property type="entry name" value="Pheromone-binding domain of LuxR-like quorum-sensing transcription factors"/>
    <property type="match status" value="1"/>
</dbReference>
<dbReference type="PROSITE" id="PS50043">
    <property type="entry name" value="HTH_LUXR_2"/>
    <property type="match status" value="1"/>
</dbReference>
<sequence length="243" mass="26938">MIVGEDQLWGRRALEFVDSVERLEAPALISRFESLIASCGFTAYIMAGLPSRNAGLPELTLANGWPRDWFDLYVSENFSAVDPVPRHGATTVHPFVWSDAPYDRDRDPAAHRVMTRAAEFGLVEGYCIPLHYDDGSAAISMAGKDPDLSPAARGAMQLVSIYAHSRLRALSRPKPIRRNRLTPRECEILQWAAQGKTAWEISVILCITERTVKFHLIEAARKLDAANRTAAVAKALTLGLIRL</sequence>
<gene>
    <name evidence="3" type="primary">rpaR</name>
    <name evidence="5" type="ordered locus">RPA0321</name>
</gene>
<protein>
    <recommendedName>
        <fullName evidence="4">HTH-type quorum sensing-dependent transcriptional regulator RpaR</fullName>
    </recommendedName>
    <alternativeName>
        <fullName evidence="4">4-coumaroyl-homoserine lactone receptor</fullName>
        <shortName evidence="3">pC-HSL receptor</shortName>
    </alternativeName>
</protein>
<keyword id="KW-0238">DNA-binding</keyword>
<keyword id="KW-0673">Quorum sensing</keyword>
<keyword id="KW-0678">Repressor</keyword>
<keyword id="KW-0804">Transcription</keyword>
<keyword id="KW-0805">Transcription regulation</keyword>